<gene>
    <name evidence="1" type="primary">thyX</name>
    <name type="ordered locus">GOX1427</name>
</gene>
<organism>
    <name type="scientific">Gluconobacter oxydans (strain 621H)</name>
    <name type="common">Gluconobacter suboxydans</name>
    <dbReference type="NCBI Taxonomy" id="290633"/>
    <lineage>
        <taxon>Bacteria</taxon>
        <taxon>Pseudomonadati</taxon>
        <taxon>Pseudomonadota</taxon>
        <taxon>Alphaproteobacteria</taxon>
        <taxon>Acetobacterales</taxon>
        <taxon>Acetobacteraceae</taxon>
        <taxon>Gluconobacter</taxon>
    </lineage>
</organism>
<evidence type="ECO:0000255" key="1">
    <source>
        <dbReference type="HAMAP-Rule" id="MF_01408"/>
    </source>
</evidence>
<evidence type="ECO:0000255" key="2">
    <source>
        <dbReference type="PROSITE-ProRule" id="PRU00661"/>
    </source>
</evidence>
<evidence type="ECO:0000256" key="3">
    <source>
        <dbReference type="SAM" id="MobiDB-lite"/>
    </source>
</evidence>
<sequence length="303" mass="34609">MALTSEQRAEIEAQRSEPQLTSRPTVAAMENLLFTPFEVLDHGFLRVVDYMGDDGAVVQAARVSYGRGTKKVSEDAGLIRYLMRHRHSTPFEMCEIKFHVKLPVFVARQWIRHRMASVNEYSARYSILDREFYLPAMDQVAAQSSSNRQGRSDALDADTAHQVLEILRRDASQCYDDYESLLNPEGRGLARELARINLTLNTYTQWYWKIDLHNLMHFLALRADPHAQYEIRVYAEKMIEILKAWVPATAAAFEEYRLGAFTLSAGMLKVVRRRLAGETVTQENSGLTKREWSEMAAVLDGAS</sequence>
<comment type="function">
    <text evidence="1">Catalyzes the reductive methylation of 2'-deoxyuridine-5'-monophosphate (dUMP) to 2'-deoxythymidine-5'-monophosphate (dTMP) while utilizing 5,10-methylenetetrahydrofolate (mTHF) as the methyl donor, and NADPH and FADH(2) as the reductant.</text>
</comment>
<comment type="catalytic activity">
    <reaction evidence="1">
        <text>dUMP + (6R)-5,10-methylene-5,6,7,8-tetrahydrofolate + NADPH + H(+) = dTMP + (6S)-5,6,7,8-tetrahydrofolate + NADP(+)</text>
        <dbReference type="Rhea" id="RHEA:29043"/>
        <dbReference type="ChEBI" id="CHEBI:15378"/>
        <dbReference type="ChEBI" id="CHEBI:15636"/>
        <dbReference type="ChEBI" id="CHEBI:57453"/>
        <dbReference type="ChEBI" id="CHEBI:57783"/>
        <dbReference type="ChEBI" id="CHEBI:58349"/>
        <dbReference type="ChEBI" id="CHEBI:63528"/>
        <dbReference type="ChEBI" id="CHEBI:246422"/>
        <dbReference type="EC" id="2.1.1.148"/>
    </reaction>
</comment>
<comment type="cofactor">
    <cofactor evidence="1">
        <name>FAD</name>
        <dbReference type="ChEBI" id="CHEBI:57692"/>
    </cofactor>
    <text evidence="1">Binds 4 FAD per tetramer. Each FAD binding site is formed by three monomers.</text>
</comment>
<comment type="pathway">
    <text evidence="1">Pyrimidine metabolism; dTTP biosynthesis.</text>
</comment>
<comment type="subunit">
    <text evidence="1">Homotetramer.</text>
</comment>
<comment type="similarity">
    <text evidence="1">Belongs to the thymidylate synthase ThyX family.</text>
</comment>
<keyword id="KW-0274">FAD</keyword>
<keyword id="KW-0285">Flavoprotein</keyword>
<keyword id="KW-0489">Methyltransferase</keyword>
<keyword id="KW-0521">NADP</keyword>
<keyword id="KW-0545">Nucleotide biosynthesis</keyword>
<keyword id="KW-1185">Reference proteome</keyword>
<keyword id="KW-0808">Transferase</keyword>
<protein>
    <recommendedName>
        <fullName evidence="1">Flavin-dependent thymidylate synthase</fullName>
        <shortName evidence="1">FDTS</shortName>
        <ecNumber evidence="1">2.1.1.148</ecNumber>
    </recommendedName>
    <alternativeName>
        <fullName evidence="1">FAD-dependent thymidylate synthase</fullName>
    </alternativeName>
    <alternativeName>
        <fullName evidence="1">Thymidylate synthase ThyX</fullName>
        <shortName evidence="1">TS</shortName>
        <shortName evidence="1">TSase</shortName>
    </alternativeName>
</protein>
<proteinExistence type="inferred from homology"/>
<dbReference type="EC" id="2.1.1.148" evidence="1"/>
<dbReference type="EMBL" id="CP000009">
    <property type="protein sequence ID" value="AAW61178.1"/>
    <property type="molecule type" value="Genomic_DNA"/>
</dbReference>
<dbReference type="RefSeq" id="WP_011252965.1">
    <property type="nucleotide sequence ID" value="NC_006677.1"/>
</dbReference>
<dbReference type="SMR" id="Q5FR18"/>
<dbReference type="STRING" id="290633.GOX1427"/>
<dbReference type="KEGG" id="gox:GOX1427"/>
<dbReference type="eggNOG" id="COG1351">
    <property type="taxonomic scope" value="Bacteria"/>
</dbReference>
<dbReference type="HOGENOM" id="CLU_067790_0_0_5"/>
<dbReference type="UniPathway" id="UPA00575"/>
<dbReference type="Proteomes" id="UP000006375">
    <property type="component" value="Chromosome"/>
</dbReference>
<dbReference type="GO" id="GO:0050660">
    <property type="term" value="F:flavin adenine dinucleotide binding"/>
    <property type="evidence" value="ECO:0007669"/>
    <property type="project" value="InterPro"/>
</dbReference>
<dbReference type="GO" id="GO:0070402">
    <property type="term" value="F:NADPH binding"/>
    <property type="evidence" value="ECO:0007669"/>
    <property type="project" value="TreeGrafter"/>
</dbReference>
<dbReference type="GO" id="GO:0050797">
    <property type="term" value="F:thymidylate synthase (FAD) activity"/>
    <property type="evidence" value="ECO:0007669"/>
    <property type="project" value="UniProtKB-UniRule"/>
</dbReference>
<dbReference type="GO" id="GO:0004799">
    <property type="term" value="F:thymidylate synthase activity"/>
    <property type="evidence" value="ECO:0007669"/>
    <property type="project" value="TreeGrafter"/>
</dbReference>
<dbReference type="GO" id="GO:0006231">
    <property type="term" value="P:dTMP biosynthetic process"/>
    <property type="evidence" value="ECO:0007669"/>
    <property type="project" value="UniProtKB-UniRule"/>
</dbReference>
<dbReference type="GO" id="GO:0006235">
    <property type="term" value="P:dTTP biosynthetic process"/>
    <property type="evidence" value="ECO:0007669"/>
    <property type="project" value="UniProtKB-UniRule"/>
</dbReference>
<dbReference type="GO" id="GO:0032259">
    <property type="term" value="P:methylation"/>
    <property type="evidence" value="ECO:0007669"/>
    <property type="project" value="UniProtKB-KW"/>
</dbReference>
<dbReference type="CDD" id="cd20175">
    <property type="entry name" value="ThyX"/>
    <property type="match status" value="1"/>
</dbReference>
<dbReference type="Gene3D" id="3.30.1360.170">
    <property type="match status" value="1"/>
</dbReference>
<dbReference type="HAMAP" id="MF_01408">
    <property type="entry name" value="ThyX"/>
    <property type="match status" value="1"/>
</dbReference>
<dbReference type="InterPro" id="IPR003669">
    <property type="entry name" value="Thymidylate_synthase_ThyX"/>
</dbReference>
<dbReference type="InterPro" id="IPR036098">
    <property type="entry name" value="Thymidylate_synthase_ThyX_sf"/>
</dbReference>
<dbReference type="NCBIfam" id="TIGR02170">
    <property type="entry name" value="thyX"/>
    <property type="match status" value="1"/>
</dbReference>
<dbReference type="PANTHER" id="PTHR34934">
    <property type="entry name" value="FLAVIN-DEPENDENT THYMIDYLATE SYNTHASE"/>
    <property type="match status" value="1"/>
</dbReference>
<dbReference type="PANTHER" id="PTHR34934:SF1">
    <property type="entry name" value="FLAVIN-DEPENDENT THYMIDYLATE SYNTHASE"/>
    <property type="match status" value="1"/>
</dbReference>
<dbReference type="Pfam" id="PF02511">
    <property type="entry name" value="Thy1"/>
    <property type="match status" value="1"/>
</dbReference>
<dbReference type="SUPFAM" id="SSF69796">
    <property type="entry name" value="Thymidylate synthase-complementing protein Thy1"/>
    <property type="match status" value="1"/>
</dbReference>
<dbReference type="PROSITE" id="PS51331">
    <property type="entry name" value="THYX"/>
    <property type="match status" value="1"/>
</dbReference>
<accession>Q5FR18</accession>
<name>THYX_GLUOX</name>
<feature type="chain" id="PRO_0000175565" description="Flavin-dependent thymidylate synthase">
    <location>
        <begin position="1"/>
        <end position="303"/>
    </location>
</feature>
<feature type="domain" description="ThyX" evidence="2">
    <location>
        <begin position="43"/>
        <end position="256"/>
    </location>
</feature>
<feature type="region of interest" description="Disordered" evidence="3">
    <location>
        <begin position="1"/>
        <end position="21"/>
    </location>
</feature>
<feature type="short sequence motif" description="ThyX motif" evidence="1">
    <location>
        <begin position="112"/>
        <end position="122"/>
    </location>
</feature>
<feature type="active site" description="Involved in ionization of N3 of dUMP, leading to its activation" evidence="1">
    <location>
        <position position="222"/>
    </location>
</feature>
<feature type="binding site" evidence="1">
    <location>
        <position position="89"/>
    </location>
    <ligand>
        <name>FAD</name>
        <dbReference type="ChEBI" id="CHEBI:57692"/>
        <note>ligand shared between neighboring subunits</note>
    </ligand>
</feature>
<feature type="binding site" evidence="1">
    <location>
        <begin position="109"/>
        <end position="112"/>
    </location>
    <ligand>
        <name>dUMP</name>
        <dbReference type="ChEBI" id="CHEBI:246422"/>
        <note>ligand shared between dimeric partners</note>
    </ligand>
</feature>
<feature type="binding site" evidence="1">
    <location>
        <begin position="112"/>
        <end position="114"/>
    </location>
    <ligand>
        <name>FAD</name>
        <dbReference type="ChEBI" id="CHEBI:57692"/>
        <note>ligand shared between neighboring subunits</note>
    </ligand>
</feature>
<feature type="binding site" description="in other chain" evidence="1">
    <location>
        <begin position="120"/>
        <end position="124"/>
    </location>
    <ligand>
        <name>dUMP</name>
        <dbReference type="ChEBI" id="CHEBI:246422"/>
        <note>ligand shared between dimeric partners</note>
    </ligand>
</feature>
<feature type="binding site" evidence="1">
    <location>
        <position position="120"/>
    </location>
    <ligand>
        <name>FAD</name>
        <dbReference type="ChEBI" id="CHEBI:57692"/>
        <note>ligand shared between neighboring subunits</note>
    </ligand>
</feature>
<feature type="binding site" description="in other chain" evidence="1">
    <location>
        <position position="195"/>
    </location>
    <ligand>
        <name>dUMP</name>
        <dbReference type="ChEBI" id="CHEBI:246422"/>
        <note>ligand shared between dimeric partners</note>
    </ligand>
</feature>
<feature type="binding site" evidence="1">
    <location>
        <begin position="211"/>
        <end position="213"/>
    </location>
    <ligand>
        <name>FAD</name>
        <dbReference type="ChEBI" id="CHEBI:57692"/>
        <note>ligand shared between neighboring subunits</note>
    </ligand>
</feature>
<feature type="binding site" evidence="1">
    <location>
        <position position="217"/>
    </location>
    <ligand>
        <name>FAD</name>
        <dbReference type="ChEBI" id="CHEBI:57692"/>
        <note>ligand shared between neighboring subunits</note>
    </ligand>
</feature>
<feature type="binding site" evidence="1">
    <location>
        <position position="222"/>
    </location>
    <ligand>
        <name>dUMP</name>
        <dbReference type="ChEBI" id="CHEBI:246422"/>
        <note>ligand shared between dimeric partners</note>
    </ligand>
</feature>
<reference key="1">
    <citation type="journal article" date="2005" name="Nat. Biotechnol.">
        <title>Complete genome sequence of the acetic acid bacterium Gluconobacter oxydans.</title>
        <authorList>
            <person name="Prust C."/>
            <person name="Hoffmeister M."/>
            <person name="Liesegang H."/>
            <person name="Wiezer A."/>
            <person name="Fricke W.F."/>
            <person name="Ehrenreich A."/>
            <person name="Gottschalk G."/>
            <person name="Deppenmeier U."/>
        </authorList>
    </citation>
    <scope>NUCLEOTIDE SEQUENCE [LARGE SCALE GENOMIC DNA]</scope>
    <source>
        <strain>621H</strain>
    </source>
</reference>